<sequence length="223" mass="24913">MRVKEMNESLRPREKMKINGISSMSDEELMQIILKTGIKEEGVEILSKRVIDYINENDYKDLCVEELMKIKGIGMAKATSILAGIEIGRRLSLRKAMDSFSLNDPDSVAEIFCNEIGSCDVENFYALLLDTKNRIISKELISKGTINQSIVHPREVFKSAIKKGANSIILVHNHPSGSLIPSNADIEVTKRLDKVGDLVGIQVLDHIIVSSNDSLSMRKGMYF</sequence>
<proteinExistence type="inferred from homology"/>
<keyword id="KW-0378">Hydrolase</keyword>
<keyword id="KW-0479">Metal-binding</keyword>
<keyword id="KW-0482">Metalloprotease</keyword>
<keyword id="KW-0645">Protease</keyword>
<keyword id="KW-1185">Reference proteome</keyword>
<keyword id="KW-0862">Zinc</keyword>
<feature type="chain" id="PRO_1000195298" description="UPF0758 protein FMG_0357">
    <location>
        <begin position="1"/>
        <end position="223"/>
    </location>
</feature>
<feature type="domain" description="MPN" evidence="1">
    <location>
        <begin position="101"/>
        <end position="223"/>
    </location>
</feature>
<feature type="short sequence motif" description="JAMM motif" evidence="1">
    <location>
        <begin position="172"/>
        <end position="185"/>
    </location>
</feature>
<feature type="binding site" evidence="1">
    <location>
        <position position="172"/>
    </location>
    <ligand>
        <name>Zn(2+)</name>
        <dbReference type="ChEBI" id="CHEBI:29105"/>
        <note>catalytic</note>
    </ligand>
</feature>
<feature type="binding site" evidence="1">
    <location>
        <position position="174"/>
    </location>
    <ligand>
        <name>Zn(2+)</name>
        <dbReference type="ChEBI" id="CHEBI:29105"/>
        <note>catalytic</note>
    </ligand>
</feature>
<feature type="binding site" evidence="1">
    <location>
        <position position="185"/>
    </location>
    <ligand>
        <name>Zn(2+)</name>
        <dbReference type="ChEBI" id="CHEBI:29105"/>
        <note>catalytic</note>
    </ligand>
</feature>
<comment type="similarity">
    <text evidence="2">Belongs to the UPF0758 family.</text>
</comment>
<gene>
    <name type="ordered locus">FMG_0357</name>
</gene>
<reference key="1">
    <citation type="journal article" date="2008" name="DNA Res.">
        <title>Complete genome sequence of Finegoldia magna, an anaerobic opportunistic pathogen.</title>
        <authorList>
            <person name="Goto T."/>
            <person name="Yamashita A."/>
            <person name="Hirakawa H."/>
            <person name="Matsutani M."/>
            <person name="Todo K."/>
            <person name="Ohshima K."/>
            <person name="Toh H."/>
            <person name="Miyamoto K."/>
            <person name="Kuhara S."/>
            <person name="Hattori M."/>
            <person name="Shimizu T."/>
            <person name="Akimoto S."/>
        </authorList>
    </citation>
    <scope>NUCLEOTIDE SEQUENCE [LARGE SCALE GENOMIC DNA]</scope>
    <source>
        <strain>ATCC 29328 / DSM 20472 / WAL 2508</strain>
    </source>
</reference>
<name>Y357_FINM2</name>
<organism>
    <name type="scientific">Finegoldia magna (strain ATCC 29328 / DSM 20472 / WAL 2508)</name>
    <name type="common">Peptostreptococcus magnus</name>
    <dbReference type="NCBI Taxonomy" id="334413"/>
    <lineage>
        <taxon>Bacteria</taxon>
        <taxon>Bacillati</taxon>
        <taxon>Bacillota</taxon>
        <taxon>Tissierellia</taxon>
        <taxon>Tissierellales</taxon>
        <taxon>Peptoniphilaceae</taxon>
        <taxon>Finegoldia</taxon>
    </lineage>
</organism>
<protein>
    <recommendedName>
        <fullName>UPF0758 protein FMG_0357</fullName>
    </recommendedName>
</protein>
<evidence type="ECO:0000255" key="1">
    <source>
        <dbReference type="PROSITE-ProRule" id="PRU01182"/>
    </source>
</evidence>
<evidence type="ECO:0000305" key="2"/>
<accession>B0S3Y4</accession>
<dbReference type="EMBL" id="AP008971">
    <property type="protein sequence ID" value="BAG07775.1"/>
    <property type="molecule type" value="Genomic_DNA"/>
</dbReference>
<dbReference type="RefSeq" id="WP_012290355.1">
    <property type="nucleotide sequence ID" value="NC_010376.1"/>
</dbReference>
<dbReference type="SMR" id="B0S3Y4"/>
<dbReference type="STRING" id="334413.FMG_0357"/>
<dbReference type="KEGG" id="fma:FMG_0357"/>
<dbReference type="eggNOG" id="COG2003">
    <property type="taxonomic scope" value="Bacteria"/>
</dbReference>
<dbReference type="HOGENOM" id="CLU_073529_0_2_9"/>
<dbReference type="Proteomes" id="UP000001319">
    <property type="component" value="Chromosome"/>
</dbReference>
<dbReference type="GO" id="GO:0046872">
    <property type="term" value="F:metal ion binding"/>
    <property type="evidence" value="ECO:0007669"/>
    <property type="project" value="UniProtKB-KW"/>
</dbReference>
<dbReference type="GO" id="GO:0008237">
    <property type="term" value="F:metallopeptidase activity"/>
    <property type="evidence" value="ECO:0007669"/>
    <property type="project" value="UniProtKB-KW"/>
</dbReference>
<dbReference type="GO" id="GO:0006508">
    <property type="term" value="P:proteolysis"/>
    <property type="evidence" value="ECO:0007669"/>
    <property type="project" value="UniProtKB-KW"/>
</dbReference>
<dbReference type="CDD" id="cd08071">
    <property type="entry name" value="MPN_DUF2466"/>
    <property type="match status" value="1"/>
</dbReference>
<dbReference type="Gene3D" id="3.40.140.10">
    <property type="entry name" value="Cytidine Deaminase, domain 2"/>
    <property type="match status" value="1"/>
</dbReference>
<dbReference type="InterPro" id="IPR037518">
    <property type="entry name" value="MPN"/>
</dbReference>
<dbReference type="InterPro" id="IPR025657">
    <property type="entry name" value="RadC_JAB"/>
</dbReference>
<dbReference type="InterPro" id="IPR001405">
    <property type="entry name" value="UPF0758"/>
</dbReference>
<dbReference type="InterPro" id="IPR020891">
    <property type="entry name" value="UPF0758_CS"/>
</dbReference>
<dbReference type="InterPro" id="IPR046778">
    <property type="entry name" value="UPF0758_N"/>
</dbReference>
<dbReference type="NCBIfam" id="NF000642">
    <property type="entry name" value="PRK00024.1"/>
    <property type="match status" value="1"/>
</dbReference>
<dbReference type="NCBIfam" id="TIGR00608">
    <property type="entry name" value="radc"/>
    <property type="match status" value="1"/>
</dbReference>
<dbReference type="PANTHER" id="PTHR30471">
    <property type="entry name" value="DNA REPAIR PROTEIN RADC"/>
    <property type="match status" value="1"/>
</dbReference>
<dbReference type="PANTHER" id="PTHR30471:SF3">
    <property type="entry name" value="UPF0758 PROTEIN YEES-RELATED"/>
    <property type="match status" value="1"/>
</dbReference>
<dbReference type="Pfam" id="PF04002">
    <property type="entry name" value="RadC"/>
    <property type="match status" value="1"/>
</dbReference>
<dbReference type="Pfam" id="PF20582">
    <property type="entry name" value="UPF0758_N"/>
    <property type="match status" value="1"/>
</dbReference>
<dbReference type="SUPFAM" id="SSF102712">
    <property type="entry name" value="JAB1/MPN domain"/>
    <property type="match status" value="1"/>
</dbReference>
<dbReference type="PROSITE" id="PS50249">
    <property type="entry name" value="MPN"/>
    <property type="match status" value="1"/>
</dbReference>
<dbReference type="PROSITE" id="PS01302">
    <property type="entry name" value="UPF0758"/>
    <property type="match status" value="1"/>
</dbReference>